<evidence type="ECO:0000250" key="1"/>
<evidence type="ECO:0000250" key="2">
    <source>
        <dbReference type="UniProtKB" id="Q3T052"/>
    </source>
</evidence>
<evidence type="ECO:0000255" key="3"/>
<evidence type="ECO:0000255" key="4">
    <source>
        <dbReference type="PROSITE-ProRule" id="PRU00219"/>
    </source>
</evidence>
<evidence type="ECO:0000255" key="5">
    <source>
        <dbReference type="PROSITE-ProRule" id="PRU00801"/>
    </source>
</evidence>
<evidence type="ECO:0000256" key="6">
    <source>
        <dbReference type="SAM" id="MobiDB-lite"/>
    </source>
</evidence>
<evidence type="ECO:0000269" key="7">
    <source>
    </source>
</evidence>
<evidence type="ECO:0000269" key="8">
    <source>
    </source>
</evidence>
<evidence type="ECO:0000269" key="9">
    <source>
    </source>
</evidence>
<evidence type="ECO:0000269" key="10">
    <source>
    </source>
</evidence>
<evidence type="ECO:0000303" key="11">
    <source>
    </source>
</evidence>
<evidence type="ECO:0000305" key="12"/>
<comment type="function">
    <text>Type II acute-phase protein (APP) involved in inflammatory responses to trauma. May also play a role in liver development or regeneration.</text>
</comment>
<comment type="subunit">
    <text evidence="7">Interacts (via C-terminus) with DNAJC1 (via SANT 2 domain).</text>
</comment>
<comment type="subcellular location">
    <subcellularLocation>
        <location evidence="1">Secreted</location>
    </subcellularLocation>
</comment>
<comment type="alternative products">
    <event type="alternative splicing"/>
    <isoform>
        <id>A6X935-1</id>
        <name>1</name>
        <sequence type="displayed"/>
    </isoform>
    <isoform>
        <id>A6X935-2</id>
        <name>2</name>
        <sequence type="described" ref="VSP_044763"/>
    </isoform>
</comment>
<comment type="tissue specificity">
    <text evidence="10">Highly expressed in liver. Weak expression in lung and heart.</text>
</comment>
<comment type="developmental stage">
    <text evidence="10">During mid-embryonic gestation, expressed abundantly in liver, less in heart and brain. Highest expression at day 14.5.</text>
</comment>
<comment type="PTM">
    <text evidence="1 8 9">May be O-glycosylated (By similarity). N-glycosylated.</text>
</comment>
<comment type="similarity">
    <text evidence="12">Belongs to the ITIH family.</text>
</comment>
<feature type="signal peptide" evidence="1">
    <location>
        <begin position="1"/>
        <end position="28"/>
    </location>
</feature>
<feature type="chain" id="PRO_0000420864" description="Inter alpha-trypsin inhibitor, heavy chain 4">
    <location>
        <begin position="29"/>
        <end position="942"/>
    </location>
</feature>
<feature type="domain" description="VIT" evidence="5">
    <location>
        <begin position="29"/>
        <end position="148"/>
    </location>
</feature>
<feature type="domain" description="VWFA" evidence="4">
    <location>
        <begin position="274"/>
        <end position="457"/>
    </location>
</feature>
<feature type="region of interest" description="Disordered" evidence="6">
    <location>
        <begin position="658"/>
        <end position="698"/>
    </location>
</feature>
<feature type="region of interest" description="Disordered" evidence="6">
    <location>
        <begin position="726"/>
        <end position="745"/>
    </location>
</feature>
<feature type="coiled-coil region" evidence="3">
    <location>
        <begin position="552"/>
        <end position="586"/>
    </location>
</feature>
<feature type="compositionally biased region" description="Pro residues" evidence="6">
    <location>
        <begin position="663"/>
        <end position="690"/>
    </location>
</feature>
<feature type="glycosylation site" description="N-linked (GlcNAc...) asparagine" evidence="8 9">
    <location>
        <position position="81"/>
    </location>
</feature>
<feature type="glycosylation site" description="N-linked (GlcNAc...) asparagine" evidence="8 9">
    <location>
        <position position="517"/>
    </location>
</feature>
<feature type="glycosylation site" description="N-linked (GlcNAc...) asparagine" evidence="8 9">
    <location>
        <position position="577"/>
    </location>
</feature>
<feature type="glycosylation site" description="O-linked (GalNAc...) threonine" evidence="2">
    <location>
        <position position="732"/>
    </location>
</feature>
<feature type="glycosylation site" description="N-linked (GlcNAc...) asparagine" evidence="8 9">
    <location>
        <position position="874"/>
    </location>
</feature>
<feature type="disulfide bond" evidence="1">
    <location>
        <begin position="761"/>
        <end position="937"/>
    </location>
</feature>
<feature type="splice variant" id="VSP_044763" description="In isoform 2." evidence="11">
    <location>
        <begin position="741"/>
        <end position="779"/>
    </location>
</feature>
<feature type="sequence conflict" description="In Ref. 2; BAC34032." evidence="12" ref="2">
    <location>
        <position position="491"/>
    </location>
</feature>
<feature type="sequence conflict" description="In Ref. 2; BAC34032." evidence="12" ref="2">
    <original>N</original>
    <variation>H</variation>
    <location>
        <position position="517"/>
    </location>
</feature>
<feature type="sequence conflict" description="In Ref. 1; AAC25786 and 5; AAH92258/AAH94457/AAH16500." evidence="12" ref="1 5">
    <original>L</original>
    <variation>R</variation>
    <location>
        <position position="650"/>
    </location>
</feature>
<feature type="sequence conflict" description="In Ref. 2; BAB23649 and 5; AAH16500/AAH92258." evidence="12" ref="2 5">
    <location>
        <position position="713"/>
    </location>
</feature>
<keyword id="KW-0011">Acute phase</keyword>
<keyword id="KW-0025">Alternative splicing</keyword>
<keyword id="KW-0175">Coiled coil</keyword>
<keyword id="KW-1015">Disulfide bond</keyword>
<keyword id="KW-0325">Glycoprotein</keyword>
<keyword id="KW-0646">Protease inhibitor</keyword>
<keyword id="KW-1185">Reference proteome</keyword>
<keyword id="KW-0964">Secreted</keyword>
<keyword id="KW-0722">Serine protease inhibitor</keyword>
<keyword id="KW-0732">Signal</keyword>
<protein>
    <recommendedName>
        <fullName>Inter alpha-trypsin inhibitor, heavy chain 4</fullName>
        <shortName>ITI heavy chain H4</shortName>
        <shortName>ITI-HC4</shortName>
        <shortName>Inter-alpha-inhibitor heavy chain 4</shortName>
    </recommendedName>
</protein>
<dbReference type="EMBL" id="AF023919">
    <property type="protein sequence ID" value="AAC25786.1"/>
    <property type="molecule type" value="mRNA"/>
</dbReference>
<dbReference type="EMBL" id="AK004893">
    <property type="protein sequence ID" value="BAB23649.1"/>
    <property type="molecule type" value="mRNA"/>
</dbReference>
<dbReference type="EMBL" id="AK050016">
    <property type="protein sequence ID" value="BAC34032.1"/>
    <property type="molecule type" value="mRNA"/>
</dbReference>
<dbReference type="EMBL" id="AK050270">
    <property type="protein sequence ID" value="BAC34155.1"/>
    <property type="molecule type" value="mRNA"/>
</dbReference>
<dbReference type="EMBL" id="CT025528">
    <property type="status" value="NOT_ANNOTATED_CDS"/>
    <property type="molecule type" value="Genomic_DNA"/>
</dbReference>
<dbReference type="EMBL" id="CH466573">
    <property type="protein sequence ID" value="EDL24772.1"/>
    <property type="molecule type" value="Genomic_DNA"/>
</dbReference>
<dbReference type="EMBL" id="BC016500">
    <property type="protein sequence ID" value="AAH16500.1"/>
    <property type="molecule type" value="mRNA"/>
</dbReference>
<dbReference type="EMBL" id="BC092258">
    <property type="protein sequence ID" value="AAH92258.1"/>
    <property type="molecule type" value="mRNA"/>
</dbReference>
<dbReference type="EMBL" id="BC094457">
    <property type="protein sequence ID" value="AAH94457.1"/>
    <property type="molecule type" value="mRNA"/>
</dbReference>
<dbReference type="CCDS" id="CCDS26901.1">
    <molecule id="A6X935-1"/>
</dbReference>
<dbReference type="RefSeq" id="NP_001152771.1">
    <property type="nucleotide sequence ID" value="NM_001159299.2"/>
</dbReference>
<dbReference type="RefSeq" id="NP_001276561.1">
    <property type="nucleotide sequence ID" value="NM_001289632.1"/>
</dbReference>
<dbReference type="RefSeq" id="NP_001276562.1">
    <property type="nucleotide sequence ID" value="NM_001289633.1"/>
</dbReference>
<dbReference type="RefSeq" id="NP_061216.2">
    <molecule id="A6X935-1"/>
    <property type="nucleotide sequence ID" value="NM_018746.4"/>
</dbReference>
<dbReference type="SMR" id="A6X935"/>
<dbReference type="BioGRID" id="200839">
    <property type="interactions" value="2"/>
</dbReference>
<dbReference type="FunCoup" id="A6X935">
    <property type="interactions" value="117"/>
</dbReference>
<dbReference type="IntAct" id="A6X935">
    <property type="interactions" value="1"/>
</dbReference>
<dbReference type="STRING" id="10090.ENSMUSP00000112798"/>
<dbReference type="GlyConnect" id="786">
    <property type="glycosylation" value="1 N-Linked glycan (1 site)"/>
</dbReference>
<dbReference type="GlyCosmos" id="A6X935">
    <property type="glycosylation" value="5 sites, 2 glycans"/>
</dbReference>
<dbReference type="GlyGen" id="A6X935">
    <property type="glycosylation" value="6 sites, 4 N-linked glycans (3 sites), 1 O-linked glycan (1 site)"/>
</dbReference>
<dbReference type="iPTMnet" id="A6X935"/>
<dbReference type="PhosphoSitePlus" id="A6X935"/>
<dbReference type="CPTAC" id="non-CPTAC-3554"/>
<dbReference type="jPOST" id="A6X935"/>
<dbReference type="PaxDb" id="10090-ENSMUSP00000006703"/>
<dbReference type="PeptideAtlas" id="A6X935"/>
<dbReference type="ProteomicsDB" id="269108">
    <molecule id="A6X935-1"/>
</dbReference>
<dbReference type="ProteomicsDB" id="269109">
    <molecule id="A6X935-2"/>
</dbReference>
<dbReference type="Antibodypedia" id="862">
    <property type="antibodies" value="417 antibodies from 35 providers"/>
</dbReference>
<dbReference type="DNASU" id="16427"/>
<dbReference type="Ensembl" id="ENSMUST00000120269.11">
    <molecule id="A6X935-1"/>
    <property type="protein sequence ID" value="ENSMUSP00000112798.4"/>
    <property type="gene ID" value="ENSMUSG00000021922.18"/>
</dbReference>
<dbReference type="GeneID" id="16427"/>
<dbReference type="KEGG" id="mmu:16427"/>
<dbReference type="UCSC" id="uc007svv.3">
    <molecule id="A6X935-1"/>
    <property type="organism name" value="mouse"/>
</dbReference>
<dbReference type="UCSC" id="uc007svx.3">
    <molecule id="A6X935-2"/>
    <property type="organism name" value="mouse"/>
</dbReference>
<dbReference type="AGR" id="MGI:109536"/>
<dbReference type="CTD" id="3700"/>
<dbReference type="MGI" id="MGI:109536">
    <property type="gene designation" value="Itih4"/>
</dbReference>
<dbReference type="VEuPathDB" id="HostDB:ENSMUSG00000021922"/>
<dbReference type="eggNOG" id="ENOG502QPS2">
    <property type="taxonomic scope" value="Eukaryota"/>
</dbReference>
<dbReference type="GeneTree" id="ENSGT00940000161039"/>
<dbReference type="InParanoid" id="A6X935"/>
<dbReference type="OMA" id="RNSVYKW"/>
<dbReference type="OrthoDB" id="299997at2759"/>
<dbReference type="PhylomeDB" id="A6X935"/>
<dbReference type="Reactome" id="R-MMU-114608">
    <property type="pathway name" value="Platelet degranulation"/>
</dbReference>
<dbReference type="BioGRID-ORCS" id="16427">
    <property type="hits" value="0 hits in 77 CRISPR screens"/>
</dbReference>
<dbReference type="ChiTaRS" id="Itih4">
    <property type="organism name" value="mouse"/>
</dbReference>
<dbReference type="PRO" id="PR:A6X935"/>
<dbReference type="Proteomes" id="UP000000589">
    <property type="component" value="Chromosome 14"/>
</dbReference>
<dbReference type="RNAct" id="A6X935">
    <property type="molecule type" value="protein"/>
</dbReference>
<dbReference type="Bgee" id="ENSMUSG00000021922">
    <property type="expression patterns" value="Expressed in left lobe of liver and 38 other cell types or tissues"/>
</dbReference>
<dbReference type="ExpressionAtlas" id="A6X935">
    <property type="expression patterns" value="baseline and differential"/>
</dbReference>
<dbReference type="GO" id="GO:0062023">
    <property type="term" value="C:collagen-containing extracellular matrix"/>
    <property type="evidence" value="ECO:0007005"/>
    <property type="project" value="BHF-UCL"/>
</dbReference>
<dbReference type="GO" id="GO:0005737">
    <property type="term" value="C:cytoplasm"/>
    <property type="evidence" value="ECO:0000314"/>
    <property type="project" value="MGI"/>
</dbReference>
<dbReference type="GO" id="GO:0005615">
    <property type="term" value="C:extracellular space"/>
    <property type="evidence" value="ECO:0007669"/>
    <property type="project" value="Ensembl"/>
</dbReference>
<dbReference type="GO" id="GO:0005886">
    <property type="term" value="C:plasma membrane"/>
    <property type="evidence" value="ECO:0000314"/>
    <property type="project" value="MGI"/>
</dbReference>
<dbReference type="GO" id="GO:0004867">
    <property type="term" value="F:serine-type endopeptidase inhibitor activity"/>
    <property type="evidence" value="ECO:0007669"/>
    <property type="project" value="UniProtKB-KW"/>
</dbReference>
<dbReference type="GO" id="GO:0006953">
    <property type="term" value="P:acute-phase response"/>
    <property type="evidence" value="ECO:0007669"/>
    <property type="project" value="UniProtKB-KW"/>
</dbReference>
<dbReference type="GO" id="GO:0030212">
    <property type="term" value="P:hyaluronan metabolic process"/>
    <property type="evidence" value="ECO:0007669"/>
    <property type="project" value="InterPro"/>
</dbReference>
<dbReference type="GO" id="GO:0034097">
    <property type="term" value="P:response to cytokine"/>
    <property type="evidence" value="ECO:0007669"/>
    <property type="project" value="Ensembl"/>
</dbReference>
<dbReference type="CDD" id="cd01461">
    <property type="entry name" value="vWA_interalpha_trypsin_inhibitor"/>
    <property type="match status" value="1"/>
</dbReference>
<dbReference type="FunFam" id="3.40.50.410:FF:000013">
    <property type="entry name" value="inter-alpha-trypsin inhibitor heavy chain H2"/>
    <property type="match status" value="1"/>
</dbReference>
<dbReference type="Gene3D" id="3.40.50.410">
    <property type="entry name" value="von Willebrand factor, type A domain"/>
    <property type="match status" value="1"/>
</dbReference>
<dbReference type="InterPro" id="IPR010600">
    <property type="entry name" value="ITI_HC_C"/>
</dbReference>
<dbReference type="InterPro" id="IPR050934">
    <property type="entry name" value="ITIH"/>
</dbReference>
<dbReference type="InterPro" id="IPR013694">
    <property type="entry name" value="VIT"/>
</dbReference>
<dbReference type="InterPro" id="IPR002035">
    <property type="entry name" value="VWF_A"/>
</dbReference>
<dbReference type="InterPro" id="IPR036465">
    <property type="entry name" value="vWFA_dom_sf"/>
</dbReference>
<dbReference type="PANTHER" id="PTHR10338">
    <property type="entry name" value="INTER-ALPHA-TRYPSIN INHIBITOR HEAVY CHAIN FAMILY MEMBER"/>
    <property type="match status" value="1"/>
</dbReference>
<dbReference type="PANTHER" id="PTHR10338:SF119">
    <property type="entry name" value="INTER-ALPHA-TRYPSIN INHIBITOR HEAVY CHAIN H4"/>
    <property type="match status" value="1"/>
</dbReference>
<dbReference type="Pfam" id="PF06668">
    <property type="entry name" value="ITI_HC_C"/>
    <property type="match status" value="1"/>
</dbReference>
<dbReference type="Pfam" id="PF08487">
    <property type="entry name" value="VIT"/>
    <property type="match status" value="1"/>
</dbReference>
<dbReference type="Pfam" id="PF00092">
    <property type="entry name" value="VWA"/>
    <property type="match status" value="1"/>
</dbReference>
<dbReference type="SMART" id="SM00609">
    <property type="entry name" value="VIT"/>
    <property type="match status" value="1"/>
</dbReference>
<dbReference type="SMART" id="SM00327">
    <property type="entry name" value="VWA"/>
    <property type="match status" value="1"/>
</dbReference>
<dbReference type="SUPFAM" id="SSF53300">
    <property type="entry name" value="vWA-like"/>
    <property type="match status" value="1"/>
</dbReference>
<dbReference type="PROSITE" id="PS51468">
    <property type="entry name" value="VIT"/>
    <property type="match status" value="1"/>
</dbReference>
<dbReference type="PROSITE" id="PS50234">
    <property type="entry name" value="VWFA"/>
    <property type="match status" value="1"/>
</dbReference>
<accession>A6X935</accession>
<accession>O54882</accession>
<accession>Q505P8</accession>
<accession>Q8C7G9</accession>
<accession>Q8C7K5</accession>
<accession>Q91W60</accession>
<accession>Q9DBK8</accession>
<name>ITIH4_MOUSE</name>
<organism>
    <name type="scientific">Mus musculus</name>
    <name type="common">Mouse</name>
    <dbReference type="NCBI Taxonomy" id="10090"/>
    <lineage>
        <taxon>Eukaryota</taxon>
        <taxon>Metazoa</taxon>
        <taxon>Chordata</taxon>
        <taxon>Craniata</taxon>
        <taxon>Vertebrata</taxon>
        <taxon>Euteleostomi</taxon>
        <taxon>Mammalia</taxon>
        <taxon>Eutheria</taxon>
        <taxon>Euarchontoglires</taxon>
        <taxon>Glires</taxon>
        <taxon>Rodentia</taxon>
        <taxon>Myomorpha</taxon>
        <taxon>Muroidea</taxon>
        <taxon>Muridae</taxon>
        <taxon>Murinae</taxon>
        <taxon>Mus</taxon>
        <taxon>Mus</taxon>
    </lineage>
</organism>
<reference key="1">
    <citation type="journal article" date="1998" name="Biochim. Biophys. Acta">
        <title>Identification of mouse itih-4 encoding a glycoprotein with two EF-hand motifs from early embryonic liver.</title>
        <authorList>
            <person name="Cai T."/>
            <person name="Yu P."/>
            <person name="Monga S.P.S."/>
            <person name="Mishra B."/>
            <person name="Mishra L."/>
        </authorList>
    </citation>
    <scope>NUCLEOTIDE SEQUENCE [MRNA]</scope>
    <scope>TISSUE SPECIFICITY</scope>
    <scope>DEVELOPMENTAL STAGE</scope>
    <scope>POSSIBLE FUNCTION</scope>
    <source>
        <strain>BALB/cJ</strain>
        <tissue>Liver</tissue>
    </source>
</reference>
<reference key="2">
    <citation type="journal article" date="2005" name="Science">
        <title>The transcriptional landscape of the mammalian genome.</title>
        <authorList>
            <person name="Carninci P."/>
            <person name="Kasukawa T."/>
            <person name="Katayama S."/>
            <person name="Gough J."/>
            <person name="Frith M.C."/>
            <person name="Maeda N."/>
            <person name="Oyama R."/>
            <person name="Ravasi T."/>
            <person name="Lenhard B."/>
            <person name="Wells C."/>
            <person name="Kodzius R."/>
            <person name="Shimokawa K."/>
            <person name="Bajic V.B."/>
            <person name="Brenner S.E."/>
            <person name="Batalov S."/>
            <person name="Forrest A.R."/>
            <person name="Zavolan M."/>
            <person name="Davis M.J."/>
            <person name="Wilming L.G."/>
            <person name="Aidinis V."/>
            <person name="Allen J.E."/>
            <person name="Ambesi-Impiombato A."/>
            <person name="Apweiler R."/>
            <person name="Aturaliya R.N."/>
            <person name="Bailey T.L."/>
            <person name="Bansal M."/>
            <person name="Baxter L."/>
            <person name="Beisel K.W."/>
            <person name="Bersano T."/>
            <person name="Bono H."/>
            <person name="Chalk A.M."/>
            <person name="Chiu K.P."/>
            <person name="Choudhary V."/>
            <person name="Christoffels A."/>
            <person name="Clutterbuck D.R."/>
            <person name="Crowe M.L."/>
            <person name="Dalla E."/>
            <person name="Dalrymple B.P."/>
            <person name="de Bono B."/>
            <person name="Della Gatta G."/>
            <person name="di Bernardo D."/>
            <person name="Down T."/>
            <person name="Engstrom P."/>
            <person name="Fagiolini M."/>
            <person name="Faulkner G."/>
            <person name="Fletcher C.F."/>
            <person name="Fukushima T."/>
            <person name="Furuno M."/>
            <person name="Futaki S."/>
            <person name="Gariboldi M."/>
            <person name="Georgii-Hemming P."/>
            <person name="Gingeras T.R."/>
            <person name="Gojobori T."/>
            <person name="Green R.E."/>
            <person name="Gustincich S."/>
            <person name="Harbers M."/>
            <person name="Hayashi Y."/>
            <person name="Hensch T.K."/>
            <person name="Hirokawa N."/>
            <person name="Hill D."/>
            <person name="Huminiecki L."/>
            <person name="Iacono M."/>
            <person name="Ikeo K."/>
            <person name="Iwama A."/>
            <person name="Ishikawa T."/>
            <person name="Jakt M."/>
            <person name="Kanapin A."/>
            <person name="Katoh M."/>
            <person name="Kawasawa Y."/>
            <person name="Kelso J."/>
            <person name="Kitamura H."/>
            <person name="Kitano H."/>
            <person name="Kollias G."/>
            <person name="Krishnan S.P."/>
            <person name="Kruger A."/>
            <person name="Kummerfeld S.K."/>
            <person name="Kurochkin I.V."/>
            <person name="Lareau L.F."/>
            <person name="Lazarevic D."/>
            <person name="Lipovich L."/>
            <person name="Liu J."/>
            <person name="Liuni S."/>
            <person name="McWilliam S."/>
            <person name="Madan Babu M."/>
            <person name="Madera M."/>
            <person name="Marchionni L."/>
            <person name="Matsuda H."/>
            <person name="Matsuzawa S."/>
            <person name="Miki H."/>
            <person name="Mignone F."/>
            <person name="Miyake S."/>
            <person name="Morris K."/>
            <person name="Mottagui-Tabar S."/>
            <person name="Mulder N."/>
            <person name="Nakano N."/>
            <person name="Nakauchi H."/>
            <person name="Ng P."/>
            <person name="Nilsson R."/>
            <person name="Nishiguchi S."/>
            <person name="Nishikawa S."/>
            <person name="Nori F."/>
            <person name="Ohara O."/>
            <person name="Okazaki Y."/>
            <person name="Orlando V."/>
            <person name="Pang K.C."/>
            <person name="Pavan W.J."/>
            <person name="Pavesi G."/>
            <person name="Pesole G."/>
            <person name="Petrovsky N."/>
            <person name="Piazza S."/>
            <person name="Reed J."/>
            <person name="Reid J.F."/>
            <person name="Ring B.Z."/>
            <person name="Ringwald M."/>
            <person name="Rost B."/>
            <person name="Ruan Y."/>
            <person name="Salzberg S.L."/>
            <person name="Sandelin A."/>
            <person name="Schneider C."/>
            <person name="Schoenbach C."/>
            <person name="Sekiguchi K."/>
            <person name="Semple C.A."/>
            <person name="Seno S."/>
            <person name="Sessa L."/>
            <person name="Sheng Y."/>
            <person name="Shibata Y."/>
            <person name="Shimada H."/>
            <person name="Shimada K."/>
            <person name="Silva D."/>
            <person name="Sinclair B."/>
            <person name="Sperling S."/>
            <person name="Stupka E."/>
            <person name="Sugiura K."/>
            <person name="Sultana R."/>
            <person name="Takenaka Y."/>
            <person name="Taki K."/>
            <person name="Tammoja K."/>
            <person name="Tan S.L."/>
            <person name="Tang S."/>
            <person name="Taylor M.S."/>
            <person name="Tegner J."/>
            <person name="Teichmann S.A."/>
            <person name="Ueda H.R."/>
            <person name="van Nimwegen E."/>
            <person name="Verardo R."/>
            <person name="Wei C.L."/>
            <person name="Yagi K."/>
            <person name="Yamanishi H."/>
            <person name="Zabarovsky E."/>
            <person name="Zhu S."/>
            <person name="Zimmer A."/>
            <person name="Hide W."/>
            <person name="Bult C."/>
            <person name="Grimmond S.M."/>
            <person name="Teasdale R.D."/>
            <person name="Liu E.T."/>
            <person name="Brusic V."/>
            <person name="Quackenbush J."/>
            <person name="Wahlestedt C."/>
            <person name="Mattick J.S."/>
            <person name="Hume D.A."/>
            <person name="Kai C."/>
            <person name="Sasaki D."/>
            <person name="Tomaru Y."/>
            <person name="Fukuda S."/>
            <person name="Kanamori-Katayama M."/>
            <person name="Suzuki M."/>
            <person name="Aoki J."/>
            <person name="Arakawa T."/>
            <person name="Iida J."/>
            <person name="Imamura K."/>
            <person name="Itoh M."/>
            <person name="Kato T."/>
            <person name="Kawaji H."/>
            <person name="Kawagashira N."/>
            <person name="Kawashima T."/>
            <person name="Kojima M."/>
            <person name="Kondo S."/>
            <person name="Konno H."/>
            <person name="Nakano K."/>
            <person name="Ninomiya N."/>
            <person name="Nishio T."/>
            <person name="Okada M."/>
            <person name="Plessy C."/>
            <person name="Shibata K."/>
            <person name="Shiraki T."/>
            <person name="Suzuki S."/>
            <person name="Tagami M."/>
            <person name="Waki K."/>
            <person name="Watahiki A."/>
            <person name="Okamura-Oho Y."/>
            <person name="Suzuki H."/>
            <person name="Kawai J."/>
            <person name="Hayashizaki Y."/>
        </authorList>
    </citation>
    <scope>NUCLEOTIDE SEQUENCE [LARGE SCALE MRNA] (ISOFORMS 1 AND 2)</scope>
    <source>
        <strain>C57BL/6J</strain>
        <tissue>Liver</tissue>
    </source>
</reference>
<reference key="3">
    <citation type="journal article" date="2009" name="PLoS Biol.">
        <title>Lineage-specific biology revealed by a finished genome assembly of the mouse.</title>
        <authorList>
            <person name="Church D.M."/>
            <person name="Goodstadt L."/>
            <person name="Hillier L.W."/>
            <person name="Zody M.C."/>
            <person name="Goldstein S."/>
            <person name="She X."/>
            <person name="Bult C.J."/>
            <person name="Agarwala R."/>
            <person name="Cherry J.L."/>
            <person name="DiCuccio M."/>
            <person name="Hlavina W."/>
            <person name="Kapustin Y."/>
            <person name="Meric P."/>
            <person name="Maglott D."/>
            <person name="Birtle Z."/>
            <person name="Marques A.C."/>
            <person name="Graves T."/>
            <person name="Zhou S."/>
            <person name="Teague B."/>
            <person name="Potamousis K."/>
            <person name="Churas C."/>
            <person name="Place M."/>
            <person name="Herschleb J."/>
            <person name="Runnheim R."/>
            <person name="Forrest D."/>
            <person name="Amos-Landgraf J."/>
            <person name="Schwartz D.C."/>
            <person name="Cheng Z."/>
            <person name="Lindblad-Toh K."/>
            <person name="Eichler E.E."/>
            <person name="Ponting C.P."/>
        </authorList>
    </citation>
    <scope>NUCLEOTIDE SEQUENCE [LARGE SCALE GENOMIC DNA] (ISOFORMS 1 AND 2)</scope>
    <source>
        <strain>C57BL/6J</strain>
    </source>
</reference>
<reference key="4">
    <citation type="submission" date="2005-07" db="EMBL/GenBank/DDBJ databases">
        <authorList>
            <person name="Mural R.J."/>
            <person name="Adams M.D."/>
            <person name="Myers E.W."/>
            <person name="Smith H.O."/>
            <person name="Venter J.C."/>
        </authorList>
    </citation>
    <scope>NUCLEOTIDE SEQUENCE [LARGE SCALE GENOMIC DNA]</scope>
</reference>
<reference key="5">
    <citation type="journal article" date="2004" name="Genome Res.">
        <title>The status, quality, and expansion of the NIH full-length cDNA project: the Mammalian Gene Collection (MGC).</title>
        <authorList>
            <consortium name="The MGC Project Team"/>
        </authorList>
    </citation>
    <scope>NUCLEOTIDE SEQUENCE [LARGE SCALE MRNA]</scope>
    <source>
        <strain>FVB/N</strain>
        <tissue>Liver</tissue>
    </source>
</reference>
<reference key="6">
    <citation type="journal article" date="2005" name="Biochem. Biophys. Res. Commun.">
        <title>BIP co-chaperone MTJ1/ERDJ1 interacts with inter-alpha-trypsin inhibitor heavy chain 4.</title>
        <authorList>
            <person name="Kroczynska B."/>
            <person name="King-Simmons L."/>
            <person name="Alloza L."/>
            <person name="Alava M.A."/>
            <person name="Elguindi E.C."/>
            <person name="Blond S.Y."/>
        </authorList>
    </citation>
    <scope>INTERACTION WITH DNJAC1</scope>
</reference>
<reference key="7">
    <citation type="journal article" date="2006" name="J. Proteome Res.">
        <title>Proteome-wide characterization of N-glycosylation events by diagonal chromatography.</title>
        <authorList>
            <person name="Ghesquiere B."/>
            <person name="Van Damme J."/>
            <person name="Martens L."/>
            <person name="Vandekerckhove J."/>
            <person name="Gevaert K."/>
        </authorList>
    </citation>
    <scope>GLYCOSYLATION [LARGE SCALE ANALYSIS] AT ASN-81; ASN-517; ASN-577 AND ASN-874</scope>
    <source>
        <strain>C57BL/6J</strain>
        <tissue>Plasma</tissue>
    </source>
</reference>
<reference key="8">
    <citation type="journal article" date="2007" name="J. Proteome Res.">
        <title>Enhanced analysis of the mouse plasma proteome using cysteine-containing tryptic glycopeptides.</title>
        <authorList>
            <person name="Bernhard O.K."/>
            <person name="Kapp E.A."/>
            <person name="Simpson R.J."/>
        </authorList>
    </citation>
    <scope>GLYCOSYLATION [LARGE SCALE ANALYSIS] AT ASN-81; ASN-517; ASN-577 AND ASN-874</scope>
    <source>
        <strain>C57BL/6J</strain>
        <tissue>Plasma</tissue>
    </source>
</reference>
<reference key="9">
    <citation type="journal article" date="2010" name="Cell">
        <title>A tissue-specific atlas of mouse protein phosphorylation and expression.</title>
        <authorList>
            <person name="Huttlin E.L."/>
            <person name="Jedrychowski M.P."/>
            <person name="Elias J.E."/>
            <person name="Goswami T."/>
            <person name="Rad R."/>
            <person name="Beausoleil S.A."/>
            <person name="Villen J."/>
            <person name="Haas W."/>
            <person name="Sowa M.E."/>
            <person name="Gygi S.P."/>
        </authorList>
    </citation>
    <scope>IDENTIFICATION BY MASS SPECTROMETRY [LARGE SCALE ANALYSIS]</scope>
    <source>
        <tissue>Brown adipose tissue</tissue>
        <tissue>Heart</tissue>
        <tissue>Kidney</tissue>
        <tissue>Liver</tissue>
        <tissue>Lung</tissue>
        <tissue>Pancreas</tissue>
        <tissue>Spleen</tissue>
        <tissue>Testis</tissue>
    </source>
</reference>
<sequence length="942" mass="104659">MKSPAPAHMWNLVLFLPSLLAVLPTTTAEKNGIDIYSLTVDSRVSSRFAHTVVTSRVVNRADAVQEATFQVELPRKAFITNFSMIIDGVTYPGVVKEKAEAQKQYSAAVGRGESAGIVKTTGRQTEKFEVSVNVAPGSKITFELIYQELLQRRLGMYELLLKVRPQQLVKHLQMDIYIFEPQGISILETESTFMTPELANALTTSQNKTKAHIRFKPTLSQQQKSQSEQDTVLNGDFIVRYDVNRSDSGGSIQIEEGYFVHHFAPENLPTMSKNVIFVIDKSGSMSGKKIQQTREALVKILKDLSPQDQFNLIEFSGEANQWKQSLVQATEENLNKAVNYASRIRAHGGTNINNAVLLAVELLDRSNQAELLPSKSVSLIILLTDGDPTVGETNPTIIQNNVREAINGQYSLFCLGFGFDVNYPFLEKMALDNGGLARRIYEDSDSALQLQDFYHEVANPLLSSVAFEYPSDAVEEVTRYKFQHHFKGSEMVVAGKLQDQGPDVLLAKVSGQMHMQNITFQTEASVAQQEKEFKSPKYIFHNFMERLWALLTIQQQLEQRISASGAELEALEAQVLNLSLKYNFVTPLTHMVVTKPEGQEQFQVAEKPVEVGDGMQRLPLAAQAHPFRPPVRGSKLMTVLKGSRSQIPRLGDAVRASRQYIPPGFPGPPGPPGFPAPPGPPGFPAPPGPPLASGSDFSLQPSYERMLSLPSVAAQYPADPHLVVTEKSKESTIPEESPNPDHPQVPTITLPLPGSSVDQLCVDILHSEKPMKLFVDPSQGLEVTGKYENTGFSWLEVTIQKPHLQVHATPERLVVTRGRKNTEYKWKKTLFSVLPGLKMTMNMMGLLQLSGPDKVTIGLLSLDDPQRGLMLLLNDTQHFSNNVKGELGQFYRDIVWEPPVEPDNTKRTVKVQGVDYLATRELKLSYQEGFPGAEISCWTVEI</sequence>
<gene>
    <name type="primary">Itih4</name>
</gene>
<proteinExistence type="evidence at protein level"/>